<protein>
    <recommendedName>
        <fullName evidence="1">Probable cytosol aminopeptidase</fullName>
        <ecNumber evidence="1">3.4.11.1</ecNumber>
    </recommendedName>
    <alternativeName>
        <fullName evidence="1">Leucine aminopeptidase</fullName>
        <shortName evidence="1">LAP</shortName>
        <ecNumber evidence="1">3.4.11.10</ecNumber>
    </alternativeName>
    <alternativeName>
        <fullName evidence="1">Leucyl aminopeptidase</fullName>
    </alternativeName>
</protein>
<reference key="1">
    <citation type="journal article" date="2003" name="Lancet">
        <title>Sequencing and analysis of the genome of the Whipple's disease bacterium Tropheryma whipplei.</title>
        <authorList>
            <person name="Bentley S.D."/>
            <person name="Maiwald M."/>
            <person name="Murphy L.D."/>
            <person name="Pallen M.J."/>
            <person name="Yeats C.A."/>
            <person name="Dover L.G."/>
            <person name="Norbertczak H.T."/>
            <person name="Besra G.S."/>
            <person name="Quail M.A."/>
            <person name="Harris D.E."/>
            <person name="von Herbay A."/>
            <person name="Goble A."/>
            <person name="Rutter S."/>
            <person name="Squares R."/>
            <person name="Squares S."/>
            <person name="Barrell B.G."/>
            <person name="Parkhill J."/>
            <person name="Relman D.A."/>
        </authorList>
    </citation>
    <scope>NUCLEOTIDE SEQUENCE [LARGE SCALE GENOMIC DNA]</scope>
    <source>
        <strain>TW08/27</strain>
    </source>
</reference>
<proteinExistence type="inferred from homology"/>
<accession>Q83I32</accession>
<gene>
    <name evidence="1" type="primary">pepA</name>
    <name type="ordered locus">TW261</name>
</gene>
<comment type="function">
    <text evidence="1">Presumably involved in the processing and regular turnover of intracellular proteins. Catalyzes the removal of unsubstituted N-terminal amino acids from various peptides.</text>
</comment>
<comment type="catalytic activity">
    <reaction evidence="1">
        <text>Release of an N-terminal amino acid, Xaa-|-Yaa-, in which Xaa is preferably Leu, but may be other amino acids including Pro although not Arg or Lys, and Yaa may be Pro. Amino acid amides and methyl esters are also readily hydrolyzed, but rates on arylamides are exceedingly low.</text>
        <dbReference type="EC" id="3.4.11.1"/>
    </reaction>
</comment>
<comment type="catalytic activity">
    <reaction evidence="1">
        <text>Release of an N-terminal amino acid, preferentially leucine, but not glutamic or aspartic acids.</text>
        <dbReference type="EC" id="3.4.11.10"/>
    </reaction>
</comment>
<comment type="cofactor">
    <cofactor evidence="1">
        <name>Mn(2+)</name>
        <dbReference type="ChEBI" id="CHEBI:29035"/>
    </cofactor>
    <text evidence="1">Binds 2 manganese ions per subunit.</text>
</comment>
<comment type="subcellular location">
    <subcellularLocation>
        <location evidence="1">Cytoplasm</location>
    </subcellularLocation>
</comment>
<comment type="similarity">
    <text evidence="1">Belongs to the peptidase M17 family.</text>
</comment>
<feature type="chain" id="PRO_0000165807" description="Probable cytosol aminopeptidase">
    <location>
        <begin position="1"/>
        <end position="502"/>
    </location>
</feature>
<feature type="active site" evidence="1">
    <location>
        <position position="266"/>
    </location>
</feature>
<feature type="active site" evidence="1">
    <location>
        <position position="340"/>
    </location>
</feature>
<feature type="binding site" evidence="1">
    <location>
        <position position="254"/>
    </location>
    <ligand>
        <name>Mn(2+)</name>
        <dbReference type="ChEBI" id="CHEBI:29035"/>
        <label>2</label>
    </ligand>
</feature>
<feature type="binding site" evidence="1">
    <location>
        <position position="259"/>
    </location>
    <ligand>
        <name>Mn(2+)</name>
        <dbReference type="ChEBI" id="CHEBI:29035"/>
        <label>1</label>
    </ligand>
</feature>
<feature type="binding site" evidence="1">
    <location>
        <position position="259"/>
    </location>
    <ligand>
        <name>Mn(2+)</name>
        <dbReference type="ChEBI" id="CHEBI:29035"/>
        <label>2</label>
    </ligand>
</feature>
<feature type="binding site" evidence="1">
    <location>
        <position position="277"/>
    </location>
    <ligand>
        <name>Mn(2+)</name>
        <dbReference type="ChEBI" id="CHEBI:29035"/>
        <label>2</label>
    </ligand>
</feature>
<feature type="binding site" evidence="1">
    <location>
        <position position="336"/>
    </location>
    <ligand>
        <name>Mn(2+)</name>
        <dbReference type="ChEBI" id="CHEBI:29035"/>
        <label>1</label>
    </ligand>
</feature>
<feature type="binding site" evidence="1">
    <location>
        <position position="338"/>
    </location>
    <ligand>
        <name>Mn(2+)</name>
        <dbReference type="ChEBI" id="CHEBI:29035"/>
        <label>1</label>
    </ligand>
</feature>
<feature type="binding site" evidence="1">
    <location>
        <position position="338"/>
    </location>
    <ligand>
        <name>Mn(2+)</name>
        <dbReference type="ChEBI" id="CHEBI:29035"/>
        <label>2</label>
    </ligand>
</feature>
<keyword id="KW-0031">Aminopeptidase</keyword>
<keyword id="KW-0963">Cytoplasm</keyword>
<keyword id="KW-0378">Hydrolase</keyword>
<keyword id="KW-0464">Manganese</keyword>
<keyword id="KW-0479">Metal-binding</keyword>
<keyword id="KW-0645">Protease</keyword>
<dbReference type="EC" id="3.4.11.1" evidence="1"/>
<dbReference type="EC" id="3.4.11.10" evidence="1"/>
<dbReference type="EMBL" id="BX251410">
    <property type="protein sequence ID" value="CAD66937.1"/>
    <property type="molecule type" value="Genomic_DNA"/>
</dbReference>
<dbReference type="SMR" id="Q83I32"/>
<dbReference type="KEGG" id="tws:TW261"/>
<dbReference type="HOGENOM" id="CLU_013734_2_2_11"/>
<dbReference type="GO" id="GO:0005737">
    <property type="term" value="C:cytoplasm"/>
    <property type="evidence" value="ECO:0007669"/>
    <property type="project" value="UniProtKB-SubCell"/>
</dbReference>
<dbReference type="GO" id="GO:0030145">
    <property type="term" value="F:manganese ion binding"/>
    <property type="evidence" value="ECO:0007669"/>
    <property type="project" value="UniProtKB-UniRule"/>
</dbReference>
<dbReference type="GO" id="GO:0070006">
    <property type="term" value="F:metalloaminopeptidase activity"/>
    <property type="evidence" value="ECO:0007669"/>
    <property type="project" value="InterPro"/>
</dbReference>
<dbReference type="GO" id="GO:0006508">
    <property type="term" value="P:proteolysis"/>
    <property type="evidence" value="ECO:0007669"/>
    <property type="project" value="UniProtKB-KW"/>
</dbReference>
<dbReference type="CDD" id="cd00433">
    <property type="entry name" value="Peptidase_M17"/>
    <property type="match status" value="1"/>
</dbReference>
<dbReference type="Gene3D" id="3.40.220.10">
    <property type="entry name" value="Leucine Aminopeptidase, subunit E, domain 1"/>
    <property type="match status" value="1"/>
</dbReference>
<dbReference type="Gene3D" id="3.40.630.10">
    <property type="entry name" value="Zn peptidases"/>
    <property type="match status" value="1"/>
</dbReference>
<dbReference type="HAMAP" id="MF_00181">
    <property type="entry name" value="Cytosol_peptidase_M17"/>
    <property type="match status" value="1"/>
</dbReference>
<dbReference type="InterPro" id="IPR011356">
    <property type="entry name" value="Leucine_aapep/pepB"/>
</dbReference>
<dbReference type="InterPro" id="IPR043472">
    <property type="entry name" value="Macro_dom-like"/>
</dbReference>
<dbReference type="InterPro" id="IPR000819">
    <property type="entry name" value="Peptidase_M17_C"/>
</dbReference>
<dbReference type="InterPro" id="IPR023042">
    <property type="entry name" value="Peptidase_M17_leu_NH2_pept"/>
</dbReference>
<dbReference type="InterPro" id="IPR008283">
    <property type="entry name" value="Peptidase_M17_N"/>
</dbReference>
<dbReference type="NCBIfam" id="NF002073">
    <property type="entry name" value="PRK00913.1-2"/>
    <property type="match status" value="1"/>
</dbReference>
<dbReference type="PANTHER" id="PTHR11963:SF23">
    <property type="entry name" value="CYTOSOL AMINOPEPTIDASE"/>
    <property type="match status" value="1"/>
</dbReference>
<dbReference type="PANTHER" id="PTHR11963">
    <property type="entry name" value="LEUCINE AMINOPEPTIDASE-RELATED"/>
    <property type="match status" value="1"/>
</dbReference>
<dbReference type="Pfam" id="PF00883">
    <property type="entry name" value="Peptidase_M17"/>
    <property type="match status" value="1"/>
</dbReference>
<dbReference type="Pfam" id="PF02789">
    <property type="entry name" value="Peptidase_M17_N"/>
    <property type="match status" value="1"/>
</dbReference>
<dbReference type="PRINTS" id="PR00481">
    <property type="entry name" value="LAMNOPPTDASE"/>
</dbReference>
<dbReference type="SUPFAM" id="SSF52949">
    <property type="entry name" value="Macro domain-like"/>
    <property type="match status" value="1"/>
</dbReference>
<dbReference type="SUPFAM" id="SSF53187">
    <property type="entry name" value="Zn-dependent exopeptidases"/>
    <property type="match status" value="1"/>
</dbReference>
<dbReference type="PROSITE" id="PS00631">
    <property type="entry name" value="CYTOSOL_AP"/>
    <property type="match status" value="1"/>
</dbReference>
<sequence length="502" mass="53336">MSDYTNTVTVEITSDDSLVADVIVVPVASGAVPRLPEDSKFRAYEDILQKLGVTGSKDELTRIPLDGSKHVVLAFIGVGKAFSATELMFAAGSAVRQIGARCIQIDFSVTQKDKLSAIVEGAFLGAYRFDKYRSKKSECPEVIRVSHNINGITDSECRQIIARAKVIAGSVGLAKDLVNTTGDDLYPAQFASFVAKDLEGIDHISVESWDEKRLQEKSCGGILGVGRGSNFPPRLVKISYTPGQYKKHLSLVGKGITFDTGGLSLKPASAMLGMKYDMTGAANVFAVLRIVALLRLSVRVTGWLCLAENMLSGSAIRPGDILRTYSGKTVEVTNTDAEGRLVLADGLALAGDERPDVIIDIATLTGAAKVALGESCSGLMGNNPDLLCSLEVAAKSVGEKFLAVPIDDDALQKALKSDIADIVNVPTSNKVPGMQFGAVFLKEFETTNDSGEAIPWAHLDVAGPANASYDTGFNSCGPTGVAVRSLVEFCRCLSSAPERKLF</sequence>
<organism>
    <name type="scientific">Tropheryma whipplei (strain TW08/27)</name>
    <name type="common">Whipple's bacillus</name>
    <dbReference type="NCBI Taxonomy" id="218496"/>
    <lineage>
        <taxon>Bacteria</taxon>
        <taxon>Bacillati</taxon>
        <taxon>Actinomycetota</taxon>
        <taxon>Actinomycetes</taxon>
        <taxon>Micrococcales</taxon>
        <taxon>Tropherymataceae</taxon>
        <taxon>Tropheryma</taxon>
    </lineage>
</organism>
<name>AMPA_TROW8</name>
<evidence type="ECO:0000255" key="1">
    <source>
        <dbReference type="HAMAP-Rule" id="MF_00181"/>
    </source>
</evidence>